<dbReference type="EMBL" id="L77117">
    <property type="protein sequence ID" value="AAB99160.1"/>
    <property type="molecule type" value="Genomic_DNA"/>
</dbReference>
<dbReference type="RefSeq" id="WP_010870668.1">
    <property type="nucleotide sequence ID" value="NC_000909.1"/>
</dbReference>
<dbReference type="STRING" id="243232.MJ_1155.2"/>
<dbReference type="PaxDb" id="243232-MJ_1155.2"/>
<dbReference type="EnsemblBacteria" id="AAB99160">
    <property type="protein sequence ID" value="AAB99160"/>
    <property type="gene ID" value="MJ_1155.2"/>
</dbReference>
<dbReference type="GeneID" id="1452053"/>
<dbReference type="KEGG" id="mja:MJ_1155.2"/>
<dbReference type="HOGENOM" id="CLU_2695791_0_0_2"/>
<dbReference type="InParanoid" id="P81317"/>
<dbReference type="OrthoDB" id="170360at2157"/>
<dbReference type="Proteomes" id="UP000000805">
    <property type="component" value="Chromosome"/>
</dbReference>
<dbReference type="GO" id="GO:0005886">
    <property type="term" value="C:plasma membrane"/>
    <property type="evidence" value="ECO:0007669"/>
    <property type="project" value="UniProtKB-SubCell"/>
</dbReference>
<reference key="1">
    <citation type="journal article" date="1996" name="Science">
        <title>Complete genome sequence of the methanogenic archaeon, Methanococcus jannaschii.</title>
        <authorList>
            <person name="Bult C.J."/>
            <person name="White O."/>
            <person name="Olsen G.J."/>
            <person name="Zhou L."/>
            <person name="Fleischmann R.D."/>
            <person name="Sutton G.G."/>
            <person name="Blake J.A."/>
            <person name="FitzGerald L.M."/>
            <person name="Clayton R.A."/>
            <person name="Gocayne J.D."/>
            <person name="Kerlavage A.R."/>
            <person name="Dougherty B.A."/>
            <person name="Tomb J.-F."/>
            <person name="Adams M.D."/>
            <person name="Reich C.I."/>
            <person name="Overbeek R."/>
            <person name="Kirkness E.F."/>
            <person name="Weinstock K.G."/>
            <person name="Merrick J.M."/>
            <person name="Glodek A."/>
            <person name="Scott J.L."/>
            <person name="Geoghagen N.S.M."/>
            <person name="Weidman J.F."/>
            <person name="Fuhrmann J.L."/>
            <person name="Nguyen D."/>
            <person name="Utterback T.R."/>
            <person name="Kelley J.M."/>
            <person name="Peterson J.D."/>
            <person name="Sadow P.W."/>
            <person name="Hanna M.C."/>
            <person name="Cotton M.D."/>
            <person name="Roberts K.M."/>
            <person name="Hurst M.A."/>
            <person name="Kaine B.P."/>
            <person name="Borodovsky M."/>
            <person name="Klenk H.-P."/>
            <person name="Fraser C.M."/>
            <person name="Smith H.O."/>
            <person name="Woese C.R."/>
            <person name="Venter J.C."/>
        </authorList>
    </citation>
    <scope>NUCLEOTIDE SEQUENCE [LARGE SCALE GENOMIC DNA]</scope>
    <source>
        <strain>ATCC 43067 / DSM 2661 / JAL-1 / JCM 10045 / NBRC 100440</strain>
    </source>
</reference>
<organism>
    <name type="scientific">Methanocaldococcus jannaschii (strain ATCC 43067 / DSM 2661 / JAL-1 / JCM 10045 / NBRC 100440)</name>
    <name type="common">Methanococcus jannaschii</name>
    <dbReference type="NCBI Taxonomy" id="243232"/>
    <lineage>
        <taxon>Archaea</taxon>
        <taxon>Methanobacteriati</taxon>
        <taxon>Methanobacteriota</taxon>
        <taxon>Methanomada group</taxon>
        <taxon>Methanococci</taxon>
        <taxon>Methanococcales</taxon>
        <taxon>Methanocaldococcaceae</taxon>
        <taxon>Methanocaldococcus</taxon>
    </lineage>
</organism>
<proteinExistence type="predicted"/>
<sequence length="73" mass="7963">MILDKTLFSSLTFSLTVLFLLLLIPNLKGFGKLSAIIGGFIALIFQYFGYPSLGILFAGILSPIIILKIKSVK</sequence>
<keyword id="KW-1003">Cell membrane</keyword>
<keyword id="KW-0472">Membrane</keyword>
<keyword id="KW-1185">Reference proteome</keyword>
<keyword id="KW-0812">Transmembrane</keyword>
<keyword id="KW-1133">Transmembrane helix</keyword>
<accession>P81317</accession>
<evidence type="ECO:0000255" key="1"/>
<evidence type="ECO:0000305" key="2"/>
<feature type="chain" id="PRO_0000107195" description="Uncharacterized protein MJ1155.2">
    <location>
        <begin position="1"/>
        <end position="73"/>
    </location>
</feature>
<feature type="transmembrane region" description="Helical" evidence="1">
    <location>
        <begin position="7"/>
        <end position="27"/>
    </location>
</feature>
<feature type="transmembrane region" description="Helical" evidence="1">
    <location>
        <begin position="47"/>
        <end position="67"/>
    </location>
</feature>
<protein>
    <recommendedName>
        <fullName>Uncharacterized protein MJ1155.2</fullName>
    </recommendedName>
</protein>
<name>YB5B_METJA</name>
<gene>
    <name type="ordered locus">MJ1155.2</name>
</gene>
<comment type="subcellular location">
    <subcellularLocation>
        <location evidence="2">Cell membrane</location>
        <topology evidence="2">Multi-pass membrane protein</topology>
    </subcellularLocation>
</comment>